<comment type="function">
    <text>Involved in oxygen transport from the lung to the various peripheral tissues.</text>
</comment>
<comment type="subunit">
    <text>Heterotetramer of two alpha chains and two beta chains.</text>
</comment>
<comment type="tissue specificity">
    <text>Red blood cells.</text>
</comment>
<comment type="similarity">
    <text evidence="3">Belongs to the globin family.</text>
</comment>
<name>HBB_MUSPU</name>
<evidence type="ECO:0000250" key="1">
    <source>
        <dbReference type="UniProtKB" id="P02086"/>
    </source>
</evidence>
<evidence type="ECO:0000250" key="2">
    <source>
        <dbReference type="UniProtKB" id="P68871"/>
    </source>
</evidence>
<evidence type="ECO:0000255" key="3">
    <source>
        <dbReference type="PROSITE-ProRule" id="PRU00238"/>
    </source>
</evidence>
<sequence>VHLTGEEKAAVTALWGKVNVDEVGGETLGRLLVVYPWTQRFFDSFGDLSSPDAVMSNPKVKAHGKKVLNSFSEGLKNLDNLKGTFAKLSELHCDKLHVDPENFKLLGNVLVCVLAHHFGKEFTPQVQAAYQKVVAGVANALAHKYH</sequence>
<accession>P68045</accession>
<accession>P19017</accession>
<gene>
    <name type="primary">HBB</name>
</gene>
<reference key="1">
    <citation type="journal article" date="1989" name="Z. Naturforsch. C">
        <title>Carnivora: the amino acid sequence of the adult European polecat (Mustela putorius, Mustelidae) hemoglobins.</title>
        <authorList>
            <person name="Ahmed A."/>
            <person name="Jahan M."/>
            <person name="Braunitzer G."/>
            <person name="Pechlaner H."/>
        </authorList>
    </citation>
    <scope>PROTEIN SEQUENCE</scope>
</reference>
<organism>
    <name type="scientific">Mustela putorius</name>
    <name type="common">European polecat</name>
    <dbReference type="NCBI Taxonomy" id="9668"/>
    <lineage>
        <taxon>Eukaryota</taxon>
        <taxon>Metazoa</taxon>
        <taxon>Chordata</taxon>
        <taxon>Craniata</taxon>
        <taxon>Vertebrata</taxon>
        <taxon>Euteleostomi</taxon>
        <taxon>Mammalia</taxon>
        <taxon>Eutheria</taxon>
        <taxon>Laurasiatheria</taxon>
        <taxon>Carnivora</taxon>
        <taxon>Caniformia</taxon>
        <taxon>Musteloidea</taxon>
        <taxon>Mustelidae</taxon>
        <taxon>Mustelinae</taxon>
        <taxon>Mustela</taxon>
    </lineage>
</organism>
<proteinExistence type="evidence at protein level"/>
<feature type="chain" id="PRO_0000053031" description="Hemoglobin subunit beta">
    <location>
        <begin position="1"/>
        <end position="146"/>
    </location>
</feature>
<feature type="domain" description="Globin" evidence="3">
    <location>
        <begin position="2"/>
        <end position="146"/>
    </location>
</feature>
<feature type="binding site" description="distal binding residue">
    <location>
        <position position="63"/>
    </location>
    <ligand>
        <name>heme b</name>
        <dbReference type="ChEBI" id="CHEBI:60344"/>
    </ligand>
    <ligandPart>
        <name>Fe</name>
        <dbReference type="ChEBI" id="CHEBI:18248"/>
    </ligandPart>
</feature>
<feature type="binding site" description="proximal binding residue">
    <location>
        <position position="92"/>
    </location>
    <ligand>
        <name>heme b</name>
        <dbReference type="ChEBI" id="CHEBI:60344"/>
    </ligand>
    <ligandPart>
        <name>Fe</name>
        <dbReference type="ChEBI" id="CHEBI:18248"/>
    </ligandPart>
</feature>
<feature type="modified residue" description="N-acetylvaline" evidence="1">
    <location>
        <position position="1"/>
    </location>
</feature>
<feature type="modified residue" description="Phosphothreonine" evidence="2">
    <location>
        <position position="12"/>
    </location>
</feature>
<feature type="modified residue" description="Phosphoserine" evidence="2">
    <location>
        <position position="44"/>
    </location>
</feature>
<feature type="modified residue" description="N6-acetyllysine" evidence="2">
    <location>
        <position position="59"/>
    </location>
</feature>
<feature type="modified residue" description="N6-acetyllysine" evidence="2">
    <location>
        <position position="82"/>
    </location>
</feature>
<feature type="modified residue" description="S-nitrosocysteine" evidence="2">
    <location>
        <position position="93"/>
    </location>
</feature>
<feature type="modified residue" description="N6-acetyllysine" evidence="2">
    <location>
        <position position="144"/>
    </location>
</feature>
<dbReference type="PIR" id="S10103">
    <property type="entry name" value="HBUKE"/>
</dbReference>
<dbReference type="SMR" id="P68045"/>
<dbReference type="GO" id="GO:0072562">
    <property type="term" value="C:blood microparticle"/>
    <property type="evidence" value="ECO:0007669"/>
    <property type="project" value="TreeGrafter"/>
</dbReference>
<dbReference type="GO" id="GO:0031838">
    <property type="term" value="C:haptoglobin-hemoglobin complex"/>
    <property type="evidence" value="ECO:0007669"/>
    <property type="project" value="TreeGrafter"/>
</dbReference>
<dbReference type="GO" id="GO:0005833">
    <property type="term" value="C:hemoglobin complex"/>
    <property type="evidence" value="ECO:0007669"/>
    <property type="project" value="InterPro"/>
</dbReference>
<dbReference type="GO" id="GO:0031720">
    <property type="term" value="F:haptoglobin binding"/>
    <property type="evidence" value="ECO:0007669"/>
    <property type="project" value="TreeGrafter"/>
</dbReference>
<dbReference type="GO" id="GO:0020037">
    <property type="term" value="F:heme binding"/>
    <property type="evidence" value="ECO:0007669"/>
    <property type="project" value="InterPro"/>
</dbReference>
<dbReference type="GO" id="GO:0031721">
    <property type="term" value="F:hemoglobin alpha binding"/>
    <property type="evidence" value="ECO:0007669"/>
    <property type="project" value="TreeGrafter"/>
</dbReference>
<dbReference type="GO" id="GO:0046872">
    <property type="term" value="F:metal ion binding"/>
    <property type="evidence" value="ECO:0007669"/>
    <property type="project" value="UniProtKB-KW"/>
</dbReference>
<dbReference type="GO" id="GO:0043177">
    <property type="term" value="F:organic acid binding"/>
    <property type="evidence" value="ECO:0007669"/>
    <property type="project" value="TreeGrafter"/>
</dbReference>
<dbReference type="GO" id="GO:0019825">
    <property type="term" value="F:oxygen binding"/>
    <property type="evidence" value="ECO:0007669"/>
    <property type="project" value="InterPro"/>
</dbReference>
<dbReference type="GO" id="GO:0005344">
    <property type="term" value="F:oxygen carrier activity"/>
    <property type="evidence" value="ECO:0007669"/>
    <property type="project" value="UniProtKB-KW"/>
</dbReference>
<dbReference type="GO" id="GO:0004601">
    <property type="term" value="F:peroxidase activity"/>
    <property type="evidence" value="ECO:0007669"/>
    <property type="project" value="TreeGrafter"/>
</dbReference>
<dbReference type="GO" id="GO:0042744">
    <property type="term" value="P:hydrogen peroxide catabolic process"/>
    <property type="evidence" value="ECO:0007669"/>
    <property type="project" value="TreeGrafter"/>
</dbReference>
<dbReference type="CDD" id="cd08925">
    <property type="entry name" value="Hb-beta-like"/>
    <property type="match status" value="1"/>
</dbReference>
<dbReference type="FunFam" id="1.10.490.10:FF:000001">
    <property type="entry name" value="Hemoglobin subunit beta"/>
    <property type="match status" value="1"/>
</dbReference>
<dbReference type="Gene3D" id="1.10.490.10">
    <property type="entry name" value="Globins"/>
    <property type="match status" value="1"/>
</dbReference>
<dbReference type="InterPro" id="IPR000971">
    <property type="entry name" value="Globin"/>
</dbReference>
<dbReference type="InterPro" id="IPR009050">
    <property type="entry name" value="Globin-like_sf"/>
</dbReference>
<dbReference type="InterPro" id="IPR012292">
    <property type="entry name" value="Globin/Proto"/>
</dbReference>
<dbReference type="InterPro" id="IPR002337">
    <property type="entry name" value="Hemoglobin_b"/>
</dbReference>
<dbReference type="InterPro" id="IPR050056">
    <property type="entry name" value="Hemoglobin_oxygen_transport"/>
</dbReference>
<dbReference type="PANTHER" id="PTHR11442">
    <property type="entry name" value="HEMOGLOBIN FAMILY MEMBER"/>
    <property type="match status" value="1"/>
</dbReference>
<dbReference type="PANTHER" id="PTHR11442:SF42">
    <property type="entry name" value="HEMOGLOBIN SUBUNIT BETA"/>
    <property type="match status" value="1"/>
</dbReference>
<dbReference type="Pfam" id="PF00042">
    <property type="entry name" value="Globin"/>
    <property type="match status" value="1"/>
</dbReference>
<dbReference type="PRINTS" id="PR00814">
    <property type="entry name" value="BETAHAEM"/>
</dbReference>
<dbReference type="SUPFAM" id="SSF46458">
    <property type="entry name" value="Globin-like"/>
    <property type="match status" value="1"/>
</dbReference>
<dbReference type="PROSITE" id="PS01033">
    <property type="entry name" value="GLOBIN"/>
    <property type="match status" value="1"/>
</dbReference>
<protein>
    <recommendedName>
        <fullName>Hemoglobin subunit beta</fullName>
    </recommendedName>
    <alternativeName>
        <fullName>Beta-globin</fullName>
    </alternativeName>
    <alternativeName>
        <fullName>Hemoglobin beta chain</fullName>
    </alternativeName>
</protein>
<keyword id="KW-0007">Acetylation</keyword>
<keyword id="KW-0903">Direct protein sequencing</keyword>
<keyword id="KW-0349">Heme</keyword>
<keyword id="KW-0408">Iron</keyword>
<keyword id="KW-0479">Metal-binding</keyword>
<keyword id="KW-0561">Oxygen transport</keyword>
<keyword id="KW-0597">Phosphoprotein</keyword>
<keyword id="KW-0702">S-nitrosylation</keyword>
<keyword id="KW-0813">Transport</keyword>